<organism>
    <name type="scientific">Salmonella heidelberg (strain SL476)</name>
    <dbReference type="NCBI Taxonomy" id="454169"/>
    <lineage>
        <taxon>Bacteria</taxon>
        <taxon>Pseudomonadati</taxon>
        <taxon>Pseudomonadota</taxon>
        <taxon>Gammaproteobacteria</taxon>
        <taxon>Enterobacterales</taxon>
        <taxon>Enterobacteriaceae</taxon>
        <taxon>Salmonella</taxon>
    </lineage>
</organism>
<feature type="chain" id="PRO_1000140327" description="Xaa-Pro dipeptidase">
    <location>
        <begin position="1"/>
        <end position="443"/>
    </location>
</feature>
<feature type="binding site" evidence="1">
    <location>
        <position position="246"/>
    </location>
    <ligand>
        <name>Mn(2+)</name>
        <dbReference type="ChEBI" id="CHEBI:29035"/>
        <label>2</label>
    </ligand>
</feature>
<feature type="binding site" evidence="1">
    <location>
        <position position="257"/>
    </location>
    <ligand>
        <name>Mn(2+)</name>
        <dbReference type="ChEBI" id="CHEBI:29035"/>
        <label>1</label>
    </ligand>
</feature>
<feature type="binding site" evidence="1">
    <location>
        <position position="257"/>
    </location>
    <ligand>
        <name>Mn(2+)</name>
        <dbReference type="ChEBI" id="CHEBI:29035"/>
        <label>2</label>
    </ligand>
</feature>
<feature type="binding site" evidence="1">
    <location>
        <position position="339"/>
    </location>
    <ligand>
        <name>Mn(2+)</name>
        <dbReference type="ChEBI" id="CHEBI:29035"/>
        <label>1</label>
    </ligand>
</feature>
<feature type="binding site" evidence="1">
    <location>
        <position position="384"/>
    </location>
    <ligand>
        <name>Mn(2+)</name>
        <dbReference type="ChEBI" id="CHEBI:29035"/>
        <label>1</label>
    </ligand>
</feature>
<feature type="binding site" evidence="1">
    <location>
        <position position="423"/>
    </location>
    <ligand>
        <name>Mn(2+)</name>
        <dbReference type="ChEBI" id="CHEBI:29035"/>
        <label>1</label>
    </ligand>
</feature>
<feature type="binding site" evidence="1">
    <location>
        <position position="423"/>
    </location>
    <ligand>
        <name>Mn(2+)</name>
        <dbReference type="ChEBI" id="CHEBI:29035"/>
        <label>2</label>
    </ligand>
</feature>
<evidence type="ECO:0000255" key="1">
    <source>
        <dbReference type="HAMAP-Rule" id="MF_01279"/>
    </source>
</evidence>
<protein>
    <recommendedName>
        <fullName evidence="1">Xaa-Pro dipeptidase</fullName>
        <shortName evidence="1">X-Pro dipeptidase</shortName>
        <ecNumber evidence="1">3.4.13.9</ecNumber>
    </recommendedName>
    <alternativeName>
        <fullName evidence="1">Imidodipeptidase</fullName>
    </alternativeName>
    <alternativeName>
        <fullName evidence="1">Proline dipeptidase</fullName>
        <shortName evidence="1">Prolidase</shortName>
    </alternativeName>
</protein>
<name>PEPQ_SALHS</name>
<dbReference type="EC" id="3.4.13.9" evidence="1"/>
<dbReference type="EMBL" id="CP001120">
    <property type="protein sequence ID" value="ACF68152.1"/>
    <property type="molecule type" value="Genomic_DNA"/>
</dbReference>
<dbReference type="RefSeq" id="WP_000444529.1">
    <property type="nucleotide sequence ID" value="NC_011083.1"/>
</dbReference>
<dbReference type="SMR" id="B4TBS6"/>
<dbReference type="MEROPS" id="M24.003"/>
<dbReference type="KEGG" id="seh:SeHA_C4310"/>
<dbReference type="HOGENOM" id="CLU_050675_0_0_6"/>
<dbReference type="Proteomes" id="UP000001866">
    <property type="component" value="Chromosome"/>
</dbReference>
<dbReference type="GO" id="GO:0005829">
    <property type="term" value="C:cytosol"/>
    <property type="evidence" value="ECO:0007669"/>
    <property type="project" value="TreeGrafter"/>
</dbReference>
<dbReference type="GO" id="GO:0004177">
    <property type="term" value="F:aminopeptidase activity"/>
    <property type="evidence" value="ECO:0007669"/>
    <property type="project" value="TreeGrafter"/>
</dbReference>
<dbReference type="GO" id="GO:0046872">
    <property type="term" value="F:metal ion binding"/>
    <property type="evidence" value="ECO:0007669"/>
    <property type="project" value="UniProtKB-KW"/>
</dbReference>
<dbReference type="GO" id="GO:0008235">
    <property type="term" value="F:metalloexopeptidase activity"/>
    <property type="evidence" value="ECO:0007669"/>
    <property type="project" value="UniProtKB-UniRule"/>
</dbReference>
<dbReference type="GO" id="GO:0016795">
    <property type="term" value="F:phosphoric triester hydrolase activity"/>
    <property type="evidence" value="ECO:0007669"/>
    <property type="project" value="InterPro"/>
</dbReference>
<dbReference type="GO" id="GO:0102009">
    <property type="term" value="F:proline dipeptidase activity"/>
    <property type="evidence" value="ECO:0007669"/>
    <property type="project" value="UniProtKB-EC"/>
</dbReference>
<dbReference type="GO" id="GO:0006508">
    <property type="term" value="P:proteolysis"/>
    <property type="evidence" value="ECO:0007669"/>
    <property type="project" value="UniProtKB-KW"/>
</dbReference>
<dbReference type="CDD" id="cd01087">
    <property type="entry name" value="Prolidase"/>
    <property type="match status" value="1"/>
</dbReference>
<dbReference type="FunFam" id="3.40.350.10:FF:000002">
    <property type="entry name" value="Xaa-Pro dipeptidase"/>
    <property type="match status" value="1"/>
</dbReference>
<dbReference type="FunFam" id="3.90.230.10:FF:000006">
    <property type="entry name" value="Xaa-Pro dipeptidase"/>
    <property type="match status" value="1"/>
</dbReference>
<dbReference type="Gene3D" id="3.90.230.10">
    <property type="entry name" value="Creatinase/methionine aminopeptidase superfamily"/>
    <property type="match status" value="1"/>
</dbReference>
<dbReference type="Gene3D" id="3.40.350.10">
    <property type="entry name" value="Creatinase/prolidase N-terminal domain"/>
    <property type="match status" value="1"/>
</dbReference>
<dbReference type="HAMAP" id="MF_01279">
    <property type="entry name" value="X_Pro_dipeptid"/>
    <property type="match status" value="1"/>
</dbReference>
<dbReference type="InterPro" id="IPR029149">
    <property type="entry name" value="Creatin/AminoP/Spt16_N"/>
</dbReference>
<dbReference type="InterPro" id="IPR036005">
    <property type="entry name" value="Creatinase/aminopeptidase-like"/>
</dbReference>
<dbReference type="InterPro" id="IPR048819">
    <property type="entry name" value="PepQ_N"/>
</dbReference>
<dbReference type="InterPro" id="IPR000994">
    <property type="entry name" value="Pept_M24"/>
</dbReference>
<dbReference type="InterPro" id="IPR001131">
    <property type="entry name" value="Peptidase_M24B_aminopep-P_CS"/>
</dbReference>
<dbReference type="InterPro" id="IPR052433">
    <property type="entry name" value="X-Pro_dipept-like"/>
</dbReference>
<dbReference type="InterPro" id="IPR022846">
    <property type="entry name" value="X_Pro_dipept"/>
</dbReference>
<dbReference type="NCBIfam" id="NF010133">
    <property type="entry name" value="PRK13607.1"/>
    <property type="match status" value="1"/>
</dbReference>
<dbReference type="PANTHER" id="PTHR43226">
    <property type="entry name" value="XAA-PRO AMINOPEPTIDASE 3"/>
    <property type="match status" value="1"/>
</dbReference>
<dbReference type="PANTHER" id="PTHR43226:SF8">
    <property type="entry name" value="XAA-PRO DIPEPTIDASE"/>
    <property type="match status" value="1"/>
</dbReference>
<dbReference type="Pfam" id="PF21216">
    <property type="entry name" value="PepQ_N"/>
    <property type="match status" value="1"/>
</dbReference>
<dbReference type="Pfam" id="PF00557">
    <property type="entry name" value="Peptidase_M24"/>
    <property type="match status" value="1"/>
</dbReference>
<dbReference type="SUPFAM" id="SSF55920">
    <property type="entry name" value="Creatinase/aminopeptidase"/>
    <property type="match status" value="1"/>
</dbReference>
<dbReference type="PROSITE" id="PS00491">
    <property type="entry name" value="PROLINE_PEPTIDASE"/>
    <property type="match status" value="1"/>
</dbReference>
<sequence length="443" mass="50170">MESLAALYKNHIVTLQERTRDVLARFKLDALLIHSGELFNVFLDDHPYPFKVNPQFKAWVPVTQVPNCWLLVDGVNKPKLWFYLPVDYWHNVEPLPTSFWTEEVEVVALPKADGIGSQLPAARGNIGYIGPVPERALQLDIAASNINPKGVIDYLHYYRAYKTDYELACMREAQKMAVSGHRAAEEAFRSGMSEFDINLAYLTATGHRDTDVPYSNIVALNEHAAVLHYTKLDHQAPSEMRSFLLDAGAEYNGYAADLTRTWSAKSDNDYAHLVKDVNDEQLALIATMKAGVSYVDYHIQFHQRIAKLLRKHQIITDMSEEAMVENDLTGPFMPHGIGHPLGLQVHDVAGFMQDDSGTHLAAPSKYPYLRCTRVLQPRMVLTIEPGIYFIESLLAPWREGPFSKHFNWQKIEALKPFGGIRIEDNVVIHENGVENMTRDLKLA</sequence>
<comment type="function">
    <text evidence="1">Splits dipeptides with a prolyl residue in the C-terminal position.</text>
</comment>
<comment type="catalytic activity">
    <reaction evidence="1">
        <text>Xaa-L-Pro dipeptide + H2O = an L-alpha-amino acid + L-proline</text>
        <dbReference type="Rhea" id="RHEA:76407"/>
        <dbReference type="ChEBI" id="CHEBI:15377"/>
        <dbReference type="ChEBI" id="CHEBI:59869"/>
        <dbReference type="ChEBI" id="CHEBI:60039"/>
        <dbReference type="ChEBI" id="CHEBI:195196"/>
        <dbReference type="EC" id="3.4.13.9"/>
    </reaction>
</comment>
<comment type="cofactor">
    <cofactor evidence="1">
        <name>Mn(2+)</name>
        <dbReference type="ChEBI" id="CHEBI:29035"/>
    </cofactor>
    <text evidence="1">Binds 2 manganese ions per subunit.</text>
</comment>
<comment type="similarity">
    <text evidence="1">Belongs to the peptidase M24B family. Bacterial-type prolidase subfamily.</text>
</comment>
<reference key="1">
    <citation type="journal article" date="2011" name="J. Bacteriol.">
        <title>Comparative genomics of 28 Salmonella enterica isolates: evidence for CRISPR-mediated adaptive sublineage evolution.</title>
        <authorList>
            <person name="Fricke W.F."/>
            <person name="Mammel M.K."/>
            <person name="McDermott P.F."/>
            <person name="Tartera C."/>
            <person name="White D.G."/>
            <person name="Leclerc J.E."/>
            <person name="Ravel J."/>
            <person name="Cebula T.A."/>
        </authorList>
    </citation>
    <scope>NUCLEOTIDE SEQUENCE [LARGE SCALE GENOMIC DNA]</scope>
    <source>
        <strain>SL476</strain>
    </source>
</reference>
<accession>B4TBS6</accession>
<keyword id="KW-0224">Dipeptidase</keyword>
<keyword id="KW-0378">Hydrolase</keyword>
<keyword id="KW-0464">Manganese</keyword>
<keyword id="KW-0479">Metal-binding</keyword>
<keyword id="KW-0482">Metalloprotease</keyword>
<keyword id="KW-0645">Protease</keyword>
<proteinExistence type="inferred from homology"/>
<gene>
    <name evidence="1" type="primary">pepQ</name>
    <name type="ordered locus">SeHA_C4310</name>
</gene>